<accession>Q5F911</accession>
<evidence type="ECO:0000255" key="1">
    <source>
        <dbReference type="HAMAP-Rule" id="MF_01849"/>
    </source>
</evidence>
<evidence type="ECO:0000255" key="2">
    <source>
        <dbReference type="PROSITE-ProRule" id="PRU01266"/>
    </source>
</evidence>
<dbReference type="EC" id="2.1.1.192" evidence="1"/>
<dbReference type="EMBL" id="AE004969">
    <property type="protein sequence ID" value="AAW89326.1"/>
    <property type="molecule type" value="Genomic_DNA"/>
</dbReference>
<dbReference type="RefSeq" id="WP_003688948.1">
    <property type="nucleotide sequence ID" value="NC_002946.2"/>
</dbReference>
<dbReference type="RefSeq" id="YP_207738.1">
    <property type="nucleotide sequence ID" value="NC_002946.2"/>
</dbReference>
<dbReference type="SMR" id="Q5F911"/>
<dbReference type="STRING" id="242231.NGO_0596"/>
<dbReference type="GeneID" id="66752935"/>
<dbReference type="KEGG" id="ngo:NGO_0596"/>
<dbReference type="PATRIC" id="fig|242231.10.peg.705"/>
<dbReference type="HOGENOM" id="CLU_029101_0_0_4"/>
<dbReference type="Proteomes" id="UP000000535">
    <property type="component" value="Chromosome"/>
</dbReference>
<dbReference type="GO" id="GO:0005737">
    <property type="term" value="C:cytoplasm"/>
    <property type="evidence" value="ECO:0007669"/>
    <property type="project" value="UniProtKB-SubCell"/>
</dbReference>
<dbReference type="GO" id="GO:0051539">
    <property type="term" value="F:4 iron, 4 sulfur cluster binding"/>
    <property type="evidence" value="ECO:0007669"/>
    <property type="project" value="UniProtKB-UniRule"/>
</dbReference>
<dbReference type="GO" id="GO:0046872">
    <property type="term" value="F:metal ion binding"/>
    <property type="evidence" value="ECO:0007669"/>
    <property type="project" value="UniProtKB-KW"/>
</dbReference>
<dbReference type="GO" id="GO:0070040">
    <property type="term" value="F:rRNA (adenine(2503)-C2-)-methyltransferase activity"/>
    <property type="evidence" value="ECO:0007669"/>
    <property type="project" value="UniProtKB-UniRule"/>
</dbReference>
<dbReference type="GO" id="GO:0019843">
    <property type="term" value="F:rRNA binding"/>
    <property type="evidence" value="ECO:0007669"/>
    <property type="project" value="UniProtKB-UniRule"/>
</dbReference>
<dbReference type="GO" id="GO:0002935">
    <property type="term" value="F:tRNA (adenine(37)-C2)-methyltransferase activity"/>
    <property type="evidence" value="ECO:0007669"/>
    <property type="project" value="UniProtKB-UniRule"/>
</dbReference>
<dbReference type="GO" id="GO:0000049">
    <property type="term" value="F:tRNA binding"/>
    <property type="evidence" value="ECO:0007669"/>
    <property type="project" value="UniProtKB-UniRule"/>
</dbReference>
<dbReference type="GO" id="GO:0070475">
    <property type="term" value="P:rRNA base methylation"/>
    <property type="evidence" value="ECO:0007669"/>
    <property type="project" value="UniProtKB-UniRule"/>
</dbReference>
<dbReference type="GO" id="GO:0030488">
    <property type="term" value="P:tRNA methylation"/>
    <property type="evidence" value="ECO:0007669"/>
    <property type="project" value="UniProtKB-UniRule"/>
</dbReference>
<dbReference type="CDD" id="cd01335">
    <property type="entry name" value="Radical_SAM"/>
    <property type="match status" value="1"/>
</dbReference>
<dbReference type="FunFam" id="1.10.150.530:FF:000003">
    <property type="entry name" value="Dual-specificity RNA methyltransferase RlmN"/>
    <property type="match status" value="1"/>
</dbReference>
<dbReference type="FunFam" id="3.20.20.70:FF:000008">
    <property type="entry name" value="Dual-specificity RNA methyltransferase RlmN"/>
    <property type="match status" value="1"/>
</dbReference>
<dbReference type="Gene3D" id="1.10.150.530">
    <property type="match status" value="1"/>
</dbReference>
<dbReference type="Gene3D" id="3.20.20.70">
    <property type="entry name" value="Aldolase class I"/>
    <property type="match status" value="1"/>
</dbReference>
<dbReference type="HAMAP" id="MF_01849">
    <property type="entry name" value="RNA_methyltr_RlmN"/>
    <property type="match status" value="1"/>
</dbReference>
<dbReference type="InterPro" id="IPR013785">
    <property type="entry name" value="Aldolase_TIM"/>
</dbReference>
<dbReference type="InterPro" id="IPR040072">
    <property type="entry name" value="Methyltransferase_A"/>
</dbReference>
<dbReference type="InterPro" id="IPR048641">
    <property type="entry name" value="RlmN_N"/>
</dbReference>
<dbReference type="InterPro" id="IPR027492">
    <property type="entry name" value="RNA_MTrfase_RlmN"/>
</dbReference>
<dbReference type="InterPro" id="IPR004383">
    <property type="entry name" value="rRNA_lsu_MTrfase_RlmN/Cfr"/>
</dbReference>
<dbReference type="InterPro" id="IPR007197">
    <property type="entry name" value="rSAM"/>
</dbReference>
<dbReference type="NCBIfam" id="TIGR00048">
    <property type="entry name" value="rRNA_mod_RlmN"/>
    <property type="match status" value="1"/>
</dbReference>
<dbReference type="PANTHER" id="PTHR30544">
    <property type="entry name" value="23S RRNA METHYLTRANSFERASE"/>
    <property type="match status" value="1"/>
</dbReference>
<dbReference type="PANTHER" id="PTHR30544:SF5">
    <property type="entry name" value="RADICAL SAM CORE DOMAIN-CONTAINING PROTEIN"/>
    <property type="match status" value="1"/>
</dbReference>
<dbReference type="Pfam" id="PF04055">
    <property type="entry name" value="Radical_SAM"/>
    <property type="match status" value="1"/>
</dbReference>
<dbReference type="Pfam" id="PF21016">
    <property type="entry name" value="RlmN_N"/>
    <property type="match status" value="1"/>
</dbReference>
<dbReference type="PIRSF" id="PIRSF006004">
    <property type="entry name" value="CHP00048"/>
    <property type="match status" value="1"/>
</dbReference>
<dbReference type="SFLD" id="SFLDF00275">
    <property type="entry name" value="adenosine_C2_methyltransferase"/>
    <property type="match status" value="1"/>
</dbReference>
<dbReference type="SFLD" id="SFLDG01062">
    <property type="entry name" value="methyltransferase_(Class_A)"/>
    <property type="match status" value="1"/>
</dbReference>
<dbReference type="SUPFAM" id="SSF102114">
    <property type="entry name" value="Radical SAM enzymes"/>
    <property type="match status" value="1"/>
</dbReference>
<dbReference type="PROSITE" id="PS51918">
    <property type="entry name" value="RADICAL_SAM"/>
    <property type="match status" value="1"/>
</dbReference>
<keyword id="KW-0004">4Fe-4S</keyword>
<keyword id="KW-0963">Cytoplasm</keyword>
<keyword id="KW-1015">Disulfide bond</keyword>
<keyword id="KW-0408">Iron</keyword>
<keyword id="KW-0411">Iron-sulfur</keyword>
<keyword id="KW-0479">Metal-binding</keyword>
<keyword id="KW-0489">Methyltransferase</keyword>
<keyword id="KW-1185">Reference proteome</keyword>
<keyword id="KW-0698">rRNA processing</keyword>
<keyword id="KW-0949">S-adenosyl-L-methionine</keyword>
<keyword id="KW-0808">Transferase</keyword>
<keyword id="KW-0819">tRNA processing</keyword>
<sequence>MKTNLLNYDLQGLTRHFADMGEKPFRAKQVMRWMHQSGAQNFDEMTDLAKSLRHKLNEQASIEIPKLMMSQESSDGTRKWLLDVGTGNGVETVFIPESDRGTLCISSQVGCALECTFCSTGRQGFNRNLTAAEIIGQLWWANKAMGVTPKNERVISNVVMMGMGEPMANFDNVVTALSIMLDDHGYGLSRRRVTVSTSGMVPQMDRLRDVMPVALAVSLHASNDEVRNQIVPLNKKYPLKELMAACQRYLVKAPRDFITFEYVMLDGVNDKAQHAYELIELVKDVPCKFNLIPFNPFPNSGYERSSNENIRIFRDILQQAEFVVTVRKTRGDDIDAACGQLAGQVQDKTRRQQKWQQILIGQQG</sequence>
<reference key="1">
    <citation type="submission" date="2003-03" db="EMBL/GenBank/DDBJ databases">
        <title>The complete genome sequence of Neisseria gonorrhoeae.</title>
        <authorList>
            <person name="Lewis L.A."/>
            <person name="Gillaspy A.F."/>
            <person name="McLaughlin R.E."/>
            <person name="Gipson M."/>
            <person name="Ducey T.F."/>
            <person name="Ownbey T."/>
            <person name="Hartman K."/>
            <person name="Nydick C."/>
            <person name="Carson M.B."/>
            <person name="Vaughn J."/>
            <person name="Thomson C."/>
            <person name="Song L."/>
            <person name="Lin S."/>
            <person name="Yuan X."/>
            <person name="Najar F."/>
            <person name="Zhan M."/>
            <person name="Ren Q."/>
            <person name="Zhu H."/>
            <person name="Qi S."/>
            <person name="Kenton S.M."/>
            <person name="Lai H."/>
            <person name="White J.D."/>
            <person name="Clifton S."/>
            <person name="Roe B.A."/>
            <person name="Dyer D.W."/>
        </authorList>
    </citation>
    <scope>NUCLEOTIDE SEQUENCE [LARGE SCALE GENOMIC DNA]</scope>
    <source>
        <strain>ATCC 700825 / FA 1090</strain>
    </source>
</reference>
<feature type="chain" id="PRO_0000350276" description="Dual-specificity RNA methyltransferase RlmN">
    <location>
        <begin position="1"/>
        <end position="364"/>
    </location>
</feature>
<feature type="domain" description="Radical SAM core" evidence="2">
    <location>
        <begin position="97"/>
        <end position="333"/>
    </location>
</feature>
<feature type="active site" description="Proton acceptor" evidence="1">
    <location>
        <position position="91"/>
    </location>
</feature>
<feature type="active site" description="S-methylcysteine intermediate" evidence="1">
    <location>
        <position position="338"/>
    </location>
</feature>
<feature type="binding site" evidence="1">
    <location>
        <position position="111"/>
    </location>
    <ligand>
        <name>[4Fe-4S] cluster</name>
        <dbReference type="ChEBI" id="CHEBI:49883"/>
        <note>4Fe-4S-S-AdoMet</note>
    </ligand>
</feature>
<feature type="binding site" evidence="1">
    <location>
        <position position="115"/>
    </location>
    <ligand>
        <name>[4Fe-4S] cluster</name>
        <dbReference type="ChEBI" id="CHEBI:49883"/>
        <note>4Fe-4S-S-AdoMet</note>
    </ligand>
</feature>
<feature type="binding site" evidence="1">
    <location>
        <position position="118"/>
    </location>
    <ligand>
        <name>[4Fe-4S] cluster</name>
        <dbReference type="ChEBI" id="CHEBI:49883"/>
        <note>4Fe-4S-S-AdoMet</note>
    </ligand>
</feature>
<feature type="binding site" evidence="1">
    <location>
        <begin position="164"/>
        <end position="165"/>
    </location>
    <ligand>
        <name>S-adenosyl-L-methionine</name>
        <dbReference type="ChEBI" id="CHEBI:59789"/>
    </ligand>
</feature>
<feature type="binding site" evidence="1">
    <location>
        <position position="196"/>
    </location>
    <ligand>
        <name>S-adenosyl-L-methionine</name>
        <dbReference type="ChEBI" id="CHEBI:59789"/>
    </ligand>
</feature>
<feature type="binding site" evidence="1">
    <location>
        <begin position="218"/>
        <end position="220"/>
    </location>
    <ligand>
        <name>S-adenosyl-L-methionine</name>
        <dbReference type="ChEBI" id="CHEBI:59789"/>
    </ligand>
</feature>
<feature type="binding site" evidence="1">
    <location>
        <position position="295"/>
    </location>
    <ligand>
        <name>S-adenosyl-L-methionine</name>
        <dbReference type="ChEBI" id="CHEBI:59789"/>
    </ligand>
</feature>
<feature type="disulfide bond" description="(transient)" evidence="1">
    <location>
        <begin position="104"/>
        <end position="338"/>
    </location>
</feature>
<comment type="function">
    <text evidence="1">Specifically methylates position 2 of adenine 2503 in 23S rRNA and position 2 of adenine 37 in tRNAs. m2A2503 modification seems to play a crucial role in the proofreading step occurring at the peptidyl transferase center and thus would serve to optimize ribosomal fidelity.</text>
</comment>
<comment type="catalytic activity">
    <reaction evidence="1">
        <text>adenosine(2503) in 23S rRNA + 2 reduced [2Fe-2S]-[ferredoxin] + 2 S-adenosyl-L-methionine = 2-methyladenosine(2503) in 23S rRNA + 5'-deoxyadenosine + L-methionine + 2 oxidized [2Fe-2S]-[ferredoxin] + S-adenosyl-L-homocysteine</text>
        <dbReference type="Rhea" id="RHEA:42916"/>
        <dbReference type="Rhea" id="RHEA-COMP:10000"/>
        <dbReference type="Rhea" id="RHEA-COMP:10001"/>
        <dbReference type="Rhea" id="RHEA-COMP:10152"/>
        <dbReference type="Rhea" id="RHEA-COMP:10282"/>
        <dbReference type="ChEBI" id="CHEBI:17319"/>
        <dbReference type="ChEBI" id="CHEBI:33737"/>
        <dbReference type="ChEBI" id="CHEBI:33738"/>
        <dbReference type="ChEBI" id="CHEBI:57844"/>
        <dbReference type="ChEBI" id="CHEBI:57856"/>
        <dbReference type="ChEBI" id="CHEBI:59789"/>
        <dbReference type="ChEBI" id="CHEBI:74411"/>
        <dbReference type="ChEBI" id="CHEBI:74497"/>
        <dbReference type="EC" id="2.1.1.192"/>
    </reaction>
</comment>
<comment type="catalytic activity">
    <reaction evidence="1">
        <text>adenosine(37) in tRNA + 2 reduced [2Fe-2S]-[ferredoxin] + 2 S-adenosyl-L-methionine = 2-methyladenosine(37) in tRNA + 5'-deoxyadenosine + L-methionine + 2 oxidized [2Fe-2S]-[ferredoxin] + S-adenosyl-L-homocysteine</text>
        <dbReference type="Rhea" id="RHEA:43332"/>
        <dbReference type="Rhea" id="RHEA-COMP:10000"/>
        <dbReference type="Rhea" id="RHEA-COMP:10001"/>
        <dbReference type="Rhea" id="RHEA-COMP:10162"/>
        <dbReference type="Rhea" id="RHEA-COMP:10485"/>
        <dbReference type="ChEBI" id="CHEBI:17319"/>
        <dbReference type="ChEBI" id="CHEBI:33737"/>
        <dbReference type="ChEBI" id="CHEBI:33738"/>
        <dbReference type="ChEBI" id="CHEBI:57844"/>
        <dbReference type="ChEBI" id="CHEBI:57856"/>
        <dbReference type="ChEBI" id="CHEBI:59789"/>
        <dbReference type="ChEBI" id="CHEBI:74411"/>
        <dbReference type="ChEBI" id="CHEBI:74497"/>
        <dbReference type="EC" id="2.1.1.192"/>
    </reaction>
</comment>
<comment type="cofactor">
    <cofactor evidence="1">
        <name>[4Fe-4S] cluster</name>
        <dbReference type="ChEBI" id="CHEBI:49883"/>
    </cofactor>
    <text evidence="1">Binds 1 [4Fe-4S] cluster. The cluster is coordinated with 3 cysteines and an exchangeable S-adenosyl-L-methionine.</text>
</comment>
<comment type="subcellular location">
    <subcellularLocation>
        <location evidence="1">Cytoplasm</location>
    </subcellularLocation>
</comment>
<comment type="miscellaneous">
    <text evidence="1">Reaction proceeds by a ping-pong mechanism involving intermediate methylation of a conserved cysteine residue.</text>
</comment>
<comment type="similarity">
    <text evidence="1">Belongs to the radical SAM superfamily. RlmN family.</text>
</comment>
<gene>
    <name evidence="1" type="primary">rlmN</name>
    <name type="ordered locus">NGO_0596</name>
</gene>
<name>RLMN_NEIG1</name>
<proteinExistence type="inferred from homology"/>
<protein>
    <recommendedName>
        <fullName evidence="1">Dual-specificity RNA methyltransferase RlmN</fullName>
        <ecNumber evidence="1">2.1.1.192</ecNumber>
    </recommendedName>
    <alternativeName>
        <fullName evidence="1">23S rRNA (adenine(2503)-C(2))-methyltransferase</fullName>
    </alternativeName>
    <alternativeName>
        <fullName evidence="1">23S rRNA m2A2503 methyltransferase</fullName>
    </alternativeName>
    <alternativeName>
        <fullName evidence="1">Ribosomal RNA large subunit methyltransferase N</fullName>
    </alternativeName>
    <alternativeName>
        <fullName evidence="1">tRNA (adenine(37)-C(2))-methyltransferase</fullName>
    </alternativeName>
    <alternativeName>
        <fullName evidence="1">tRNA m2A37 methyltransferase</fullName>
    </alternativeName>
</protein>
<organism>
    <name type="scientific">Neisseria gonorrhoeae (strain ATCC 700825 / FA 1090)</name>
    <dbReference type="NCBI Taxonomy" id="242231"/>
    <lineage>
        <taxon>Bacteria</taxon>
        <taxon>Pseudomonadati</taxon>
        <taxon>Pseudomonadota</taxon>
        <taxon>Betaproteobacteria</taxon>
        <taxon>Neisseriales</taxon>
        <taxon>Neisseriaceae</taxon>
        <taxon>Neisseria</taxon>
    </lineage>
</organism>